<proteinExistence type="inferred from homology"/>
<reference key="1">
    <citation type="journal article" date="2005" name="Proc. Natl. Acad. Sci. U.S.A.">
        <title>Genome analysis of multiple pathogenic isolates of Streptococcus agalactiae: implications for the microbial 'pan-genome'.</title>
        <authorList>
            <person name="Tettelin H."/>
            <person name="Masignani V."/>
            <person name="Cieslewicz M.J."/>
            <person name="Donati C."/>
            <person name="Medini D."/>
            <person name="Ward N.L."/>
            <person name="Angiuoli S.V."/>
            <person name="Crabtree J."/>
            <person name="Jones A.L."/>
            <person name="Durkin A.S."/>
            <person name="DeBoy R.T."/>
            <person name="Davidsen T.M."/>
            <person name="Mora M."/>
            <person name="Scarselli M."/>
            <person name="Margarit y Ros I."/>
            <person name="Peterson J.D."/>
            <person name="Hauser C.R."/>
            <person name="Sundaram J.P."/>
            <person name="Nelson W.C."/>
            <person name="Madupu R."/>
            <person name="Brinkac L.M."/>
            <person name="Dodson R.J."/>
            <person name="Rosovitz M.J."/>
            <person name="Sullivan S.A."/>
            <person name="Daugherty S.C."/>
            <person name="Haft D.H."/>
            <person name="Selengut J."/>
            <person name="Gwinn M.L."/>
            <person name="Zhou L."/>
            <person name="Zafar N."/>
            <person name="Khouri H."/>
            <person name="Radune D."/>
            <person name="Dimitrov G."/>
            <person name="Watkins K."/>
            <person name="O'Connor K.J."/>
            <person name="Smith S."/>
            <person name="Utterback T.R."/>
            <person name="White O."/>
            <person name="Rubens C.E."/>
            <person name="Grandi G."/>
            <person name="Madoff L.C."/>
            <person name="Kasper D.L."/>
            <person name="Telford J.L."/>
            <person name="Wessels M.R."/>
            <person name="Rappuoli R."/>
            <person name="Fraser C.M."/>
        </authorList>
    </citation>
    <scope>NUCLEOTIDE SEQUENCE [LARGE SCALE GENOMIC DNA]</scope>
    <source>
        <strain>ATCC 27591 / A909 / CDC SS700</strain>
    </source>
</reference>
<gene>
    <name evidence="1" type="primary">dnaK</name>
    <name type="ordered locus">SAK_0147</name>
</gene>
<accession>Q3K3T2</accession>
<keyword id="KW-0067">ATP-binding</keyword>
<keyword id="KW-0143">Chaperone</keyword>
<keyword id="KW-0547">Nucleotide-binding</keyword>
<keyword id="KW-0597">Phosphoprotein</keyword>
<keyword id="KW-0346">Stress response</keyword>
<comment type="function">
    <text evidence="1">Acts as a chaperone.</text>
</comment>
<comment type="induction">
    <text evidence="1">By stress conditions e.g. heat shock.</text>
</comment>
<comment type="similarity">
    <text evidence="1">Belongs to the heat shock protein 70 family.</text>
</comment>
<protein>
    <recommendedName>
        <fullName evidence="1">Chaperone protein DnaK</fullName>
    </recommendedName>
    <alternativeName>
        <fullName evidence="1">HSP70</fullName>
    </alternativeName>
    <alternativeName>
        <fullName evidence="1">Heat shock 70 kDa protein</fullName>
    </alternativeName>
    <alternativeName>
        <fullName evidence="1">Heat shock protein 70</fullName>
    </alternativeName>
</protein>
<organism>
    <name type="scientific">Streptococcus agalactiae serotype Ia (strain ATCC 27591 / A909 / CDC SS700)</name>
    <dbReference type="NCBI Taxonomy" id="205921"/>
    <lineage>
        <taxon>Bacteria</taxon>
        <taxon>Bacillati</taxon>
        <taxon>Bacillota</taxon>
        <taxon>Bacilli</taxon>
        <taxon>Lactobacillales</taxon>
        <taxon>Streptococcaceae</taxon>
        <taxon>Streptococcus</taxon>
    </lineage>
</organism>
<name>DNAK_STRA1</name>
<dbReference type="EMBL" id="CP000114">
    <property type="protein sequence ID" value="ABA45634.1"/>
    <property type="molecule type" value="Genomic_DNA"/>
</dbReference>
<dbReference type="RefSeq" id="WP_000034648.1">
    <property type="nucleotide sequence ID" value="NC_007432.1"/>
</dbReference>
<dbReference type="SMR" id="Q3K3T2"/>
<dbReference type="GeneID" id="66885073"/>
<dbReference type="KEGG" id="sak:SAK_0147"/>
<dbReference type="HOGENOM" id="CLU_005965_2_4_9"/>
<dbReference type="GO" id="GO:0005524">
    <property type="term" value="F:ATP binding"/>
    <property type="evidence" value="ECO:0007669"/>
    <property type="project" value="UniProtKB-UniRule"/>
</dbReference>
<dbReference type="GO" id="GO:0140662">
    <property type="term" value="F:ATP-dependent protein folding chaperone"/>
    <property type="evidence" value="ECO:0007669"/>
    <property type="project" value="InterPro"/>
</dbReference>
<dbReference type="GO" id="GO:0051082">
    <property type="term" value="F:unfolded protein binding"/>
    <property type="evidence" value="ECO:0007669"/>
    <property type="project" value="InterPro"/>
</dbReference>
<dbReference type="CDD" id="cd10234">
    <property type="entry name" value="ASKHA_NBD_HSP70_DnaK-like"/>
    <property type="match status" value="1"/>
</dbReference>
<dbReference type="FunFam" id="2.60.34.10:FF:000014">
    <property type="entry name" value="Chaperone protein DnaK HSP70"/>
    <property type="match status" value="1"/>
</dbReference>
<dbReference type="FunFam" id="3.30.420.40:FF:000071">
    <property type="entry name" value="Molecular chaperone DnaK"/>
    <property type="match status" value="1"/>
</dbReference>
<dbReference type="FunFam" id="3.90.640.10:FF:000003">
    <property type="entry name" value="Molecular chaperone DnaK"/>
    <property type="match status" value="1"/>
</dbReference>
<dbReference type="Gene3D" id="1.20.1270.10">
    <property type="match status" value="1"/>
</dbReference>
<dbReference type="Gene3D" id="3.30.420.40">
    <property type="match status" value="2"/>
</dbReference>
<dbReference type="Gene3D" id="3.90.640.10">
    <property type="entry name" value="Actin, Chain A, domain 4"/>
    <property type="match status" value="1"/>
</dbReference>
<dbReference type="Gene3D" id="2.60.34.10">
    <property type="entry name" value="Substrate Binding Domain Of DNAk, Chain A, domain 1"/>
    <property type="match status" value="1"/>
</dbReference>
<dbReference type="HAMAP" id="MF_00332">
    <property type="entry name" value="DnaK"/>
    <property type="match status" value="1"/>
</dbReference>
<dbReference type="InterPro" id="IPR043129">
    <property type="entry name" value="ATPase_NBD"/>
</dbReference>
<dbReference type="InterPro" id="IPR012725">
    <property type="entry name" value="Chaperone_DnaK"/>
</dbReference>
<dbReference type="InterPro" id="IPR018181">
    <property type="entry name" value="Heat_shock_70_CS"/>
</dbReference>
<dbReference type="InterPro" id="IPR029048">
    <property type="entry name" value="HSP70_C_sf"/>
</dbReference>
<dbReference type="InterPro" id="IPR029047">
    <property type="entry name" value="HSP70_peptide-bd_sf"/>
</dbReference>
<dbReference type="InterPro" id="IPR013126">
    <property type="entry name" value="Hsp_70_fam"/>
</dbReference>
<dbReference type="NCBIfam" id="NF001413">
    <property type="entry name" value="PRK00290.1"/>
    <property type="match status" value="1"/>
</dbReference>
<dbReference type="NCBIfam" id="TIGR02350">
    <property type="entry name" value="prok_dnaK"/>
    <property type="match status" value="1"/>
</dbReference>
<dbReference type="PANTHER" id="PTHR19375">
    <property type="entry name" value="HEAT SHOCK PROTEIN 70KDA"/>
    <property type="match status" value="1"/>
</dbReference>
<dbReference type="Pfam" id="PF00012">
    <property type="entry name" value="HSP70"/>
    <property type="match status" value="1"/>
</dbReference>
<dbReference type="PRINTS" id="PR00301">
    <property type="entry name" value="HEATSHOCK70"/>
</dbReference>
<dbReference type="SUPFAM" id="SSF53067">
    <property type="entry name" value="Actin-like ATPase domain"/>
    <property type="match status" value="2"/>
</dbReference>
<dbReference type="SUPFAM" id="SSF100934">
    <property type="entry name" value="Heat shock protein 70kD (HSP70), C-terminal subdomain"/>
    <property type="match status" value="1"/>
</dbReference>
<dbReference type="SUPFAM" id="SSF100920">
    <property type="entry name" value="Heat shock protein 70kD (HSP70), peptide-binding domain"/>
    <property type="match status" value="1"/>
</dbReference>
<dbReference type="PROSITE" id="PS00297">
    <property type="entry name" value="HSP70_1"/>
    <property type="match status" value="1"/>
</dbReference>
<dbReference type="PROSITE" id="PS00329">
    <property type="entry name" value="HSP70_2"/>
    <property type="match status" value="1"/>
</dbReference>
<dbReference type="PROSITE" id="PS01036">
    <property type="entry name" value="HSP70_3"/>
    <property type="match status" value="1"/>
</dbReference>
<evidence type="ECO:0000255" key="1">
    <source>
        <dbReference type="HAMAP-Rule" id="MF_00332"/>
    </source>
</evidence>
<evidence type="ECO:0000256" key="2">
    <source>
        <dbReference type="SAM" id="MobiDB-lite"/>
    </source>
</evidence>
<feature type="chain" id="PRO_0000226014" description="Chaperone protein DnaK">
    <location>
        <begin position="1"/>
        <end position="609"/>
    </location>
</feature>
<feature type="region of interest" description="Disordered" evidence="2">
    <location>
        <begin position="578"/>
        <end position="609"/>
    </location>
</feature>
<feature type="compositionally biased region" description="Low complexity" evidence="2">
    <location>
        <begin position="578"/>
        <end position="595"/>
    </location>
</feature>
<feature type="compositionally biased region" description="Basic and acidic residues" evidence="2">
    <location>
        <begin position="596"/>
        <end position="609"/>
    </location>
</feature>
<feature type="modified residue" description="Phosphothreonine; by autocatalysis" evidence="1">
    <location>
        <position position="173"/>
    </location>
</feature>
<sequence>MSKIIGIDLGTTNSAVAVLEGTESKIIANPEGNRTTPSVVSFKNGEIIVGDAAKRQAVTNPDTVISIKSKMGTSEKVSANGKEYTPQEISAMILQYLKGYAEDYLGEKVEKAVITVPAYFNDAQRQATKDAGKIAGLEVERIVNEPTAAALAYGMDKTDKDEKILVFDLGGGTFDVSILELGDGVFDVLATAGDNKLGGDDFDQKIIDFLVEEFKKENGIDLSQDKMALQRLKDAAEKAKKDLSGVTQTQISLPFITAGSAGPLHLEMSLSRAKFDDLTRDLVERTKTPVRQALSDAGLSLSEIDEVILVGGSTRIPAVVEAVKAETGKEPNKSVNPDEVVAMGAAIQGGVITGDVKDVVLLDVTPLSLGIETMGGVFTKLIDRNTTIPTSKSQVFSTAADNQPAVDIHVLQGERPMAADNKTLGRFQLTDIPAAPRGIPQIEVTFDIDKNGIVSVKAKDLGTQKEQHIVIQSNSGLTDEEIDKMMKDAEANAEADAKRKEEVDLKNEVDQAIFATEKTIKETEGKGFDTERDAAQSALDELKKAQESGNLDDMKAKLEALNEKAQALAVKLYEQAAAAQQAAQGAEGAQSADSSSKGDDVVDGEFTEK</sequence>